<comment type="function">
    <text evidence="1">Catalyzes the base-exchange of a guanine (G) residue with the queuine precursor 7-aminomethyl-7-deazaguanine (PreQ1) at position 34 (anticodon wobble position) in tRNAs with GU(N) anticodons (tRNA-Asp, -Asn, -His and -Tyr). Catalysis occurs through a double-displacement mechanism. The nucleophile active site attacks the C1' of nucleotide 34 to detach the guanine base from the RNA, forming a covalent enzyme-RNA intermediate. The proton acceptor active site deprotonates the incoming PreQ1, allowing a nucleophilic attack on the C1' of the ribose to form the product. After dissociation, two additional enzymatic reactions on the tRNA convert PreQ1 to queuine (Q), resulting in the hypermodified nucleoside queuosine (7-(((4,5-cis-dihydroxy-2-cyclopenten-1-yl)amino)methyl)-7-deazaguanosine).</text>
</comment>
<comment type="catalytic activity">
    <reaction evidence="1">
        <text>7-aminomethyl-7-carbaguanine + guanosine(34) in tRNA = 7-aminomethyl-7-carbaguanosine(34) in tRNA + guanine</text>
        <dbReference type="Rhea" id="RHEA:24104"/>
        <dbReference type="Rhea" id="RHEA-COMP:10341"/>
        <dbReference type="Rhea" id="RHEA-COMP:10342"/>
        <dbReference type="ChEBI" id="CHEBI:16235"/>
        <dbReference type="ChEBI" id="CHEBI:58703"/>
        <dbReference type="ChEBI" id="CHEBI:74269"/>
        <dbReference type="ChEBI" id="CHEBI:82833"/>
        <dbReference type="EC" id="2.4.2.29"/>
    </reaction>
</comment>
<comment type="cofactor">
    <cofactor evidence="1">
        <name>Zn(2+)</name>
        <dbReference type="ChEBI" id="CHEBI:29105"/>
    </cofactor>
    <text evidence="1">Binds 1 zinc ion per subunit.</text>
</comment>
<comment type="pathway">
    <text evidence="1">tRNA modification; tRNA-queuosine biosynthesis.</text>
</comment>
<comment type="subunit">
    <text evidence="1">Homodimer. Within each dimer, one monomer is responsible for RNA recognition and catalysis, while the other monomer binds to the replacement base PreQ1.</text>
</comment>
<comment type="similarity">
    <text evidence="1">Belongs to the queuine tRNA-ribosyltransferase family.</text>
</comment>
<feature type="chain" id="PRO_0000135537" description="Queuine tRNA-ribosyltransferase">
    <location>
        <begin position="1"/>
        <end position="380"/>
    </location>
</feature>
<feature type="region of interest" description="RNA binding" evidence="1">
    <location>
        <begin position="251"/>
        <end position="257"/>
    </location>
</feature>
<feature type="region of interest" description="RNA binding; important for wobble base 34 recognition" evidence="1">
    <location>
        <begin position="275"/>
        <end position="279"/>
    </location>
</feature>
<feature type="active site" description="Proton acceptor" evidence="1">
    <location>
        <position position="96"/>
    </location>
</feature>
<feature type="active site" description="Nucleophile" evidence="1">
    <location>
        <position position="270"/>
    </location>
</feature>
<feature type="binding site" evidence="1">
    <location>
        <begin position="96"/>
        <end position="100"/>
    </location>
    <ligand>
        <name>substrate</name>
    </ligand>
</feature>
<feature type="binding site" evidence="1">
    <location>
        <position position="150"/>
    </location>
    <ligand>
        <name>substrate</name>
    </ligand>
</feature>
<feature type="binding site" evidence="1">
    <location>
        <position position="193"/>
    </location>
    <ligand>
        <name>substrate</name>
    </ligand>
</feature>
<feature type="binding site" evidence="1">
    <location>
        <position position="220"/>
    </location>
    <ligand>
        <name>substrate</name>
    </ligand>
</feature>
<feature type="binding site" evidence="1">
    <location>
        <position position="308"/>
    </location>
    <ligand>
        <name>Zn(2+)</name>
        <dbReference type="ChEBI" id="CHEBI:29105"/>
    </ligand>
</feature>
<feature type="binding site" evidence="1">
    <location>
        <position position="310"/>
    </location>
    <ligand>
        <name>Zn(2+)</name>
        <dbReference type="ChEBI" id="CHEBI:29105"/>
    </ligand>
</feature>
<feature type="binding site" evidence="1">
    <location>
        <position position="313"/>
    </location>
    <ligand>
        <name>Zn(2+)</name>
        <dbReference type="ChEBI" id="CHEBI:29105"/>
    </ligand>
</feature>
<feature type="binding site" evidence="1">
    <location>
        <position position="339"/>
    </location>
    <ligand>
        <name>Zn(2+)</name>
        <dbReference type="ChEBI" id="CHEBI:29105"/>
    </ligand>
</feature>
<gene>
    <name evidence="1" type="primary">tgt</name>
    <name type="ordered locus">M6_Spy0210</name>
</gene>
<accession>Q5XE18</accession>
<evidence type="ECO:0000255" key="1">
    <source>
        <dbReference type="HAMAP-Rule" id="MF_00168"/>
    </source>
</evidence>
<keyword id="KW-0328">Glycosyltransferase</keyword>
<keyword id="KW-0479">Metal-binding</keyword>
<keyword id="KW-0671">Queuosine biosynthesis</keyword>
<keyword id="KW-0808">Transferase</keyword>
<keyword id="KW-0819">tRNA processing</keyword>
<keyword id="KW-0862">Zinc</keyword>
<organism>
    <name type="scientific">Streptococcus pyogenes serotype M6 (strain ATCC BAA-946 / MGAS10394)</name>
    <dbReference type="NCBI Taxonomy" id="286636"/>
    <lineage>
        <taxon>Bacteria</taxon>
        <taxon>Bacillati</taxon>
        <taxon>Bacillota</taxon>
        <taxon>Bacilli</taxon>
        <taxon>Lactobacillales</taxon>
        <taxon>Streptococcaceae</taxon>
        <taxon>Streptococcus</taxon>
    </lineage>
</organism>
<name>TGT_STRP6</name>
<sequence length="380" mass="43100">MTDYPIKYRLIKTEKHTGARLGEIITPHGTFPTPMFMPVGTQATVKTQSPEELKAIGSGIILSNTYHLWLRPGDELIARSGGLHKFMNWDQPILTDSGGFQVYSLADSRNITEEGVTFKNHLNGSKMFLSPEKAISIQNNLGSDIMMSFDECPQFYQPYDYVKKSIERTSRWAERGLKAHRRPHDQGLFGIVQGAGFEDLRRQSAADLVAMDFLGYSIGGLAVGESHEEMNAVLDFTTPLLPENKPRYLMGVGAPDSLIDGVIRGVDMFDCVLPTRIARNGTCMTSEGRLVIKNAKFAEDFTPLDHDCDCYTCQNYSRAYIRHLLKADETFGIRLTSYHNLYFLVNLMKKVRQAIMDDNLLEFRQDFLERYGYNKSNRNF</sequence>
<proteinExistence type="inferred from homology"/>
<reference key="1">
    <citation type="journal article" date="2004" name="J. Infect. Dis.">
        <title>Progress toward characterization of the group A Streptococcus metagenome: complete genome sequence of a macrolide-resistant serotype M6 strain.</title>
        <authorList>
            <person name="Banks D.J."/>
            <person name="Porcella S.F."/>
            <person name="Barbian K.D."/>
            <person name="Beres S.B."/>
            <person name="Philips L.E."/>
            <person name="Voyich J.M."/>
            <person name="DeLeo F.R."/>
            <person name="Martin J.M."/>
            <person name="Somerville G.A."/>
            <person name="Musser J.M."/>
        </authorList>
    </citation>
    <scope>NUCLEOTIDE SEQUENCE [LARGE SCALE GENOMIC DNA]</scope>
    <source>
        <strain>ATCC BAA-946 / MGAS10394</strain>
    </source>
</reference>
<protein>
    <recommendedName>
        <fullName evidence="1">Queuine tRNA-ribosyltransferase</fullName>
        <ecNumber evidence="1">2.4.2.29</ecNumber>
    </recommendedName>
    <alternativeName>
        <fullName evidence="1">Guanine insertion enzyme</fullName>
    </alternativeName>
    <alternativeName>
        <fullName evidence="1">tRNA-guanine transglycosylase</fullName>
    </alternativeName>
</protein>
<dbReference type="EC" id="2.4.2.29" evidence="1"/>
<dbReference type="EMBL" id="CP000003">
    <property type="protein sequence ID" value="AAT86345.1"/>
    <property type="molecule type" value="Genomic_DNA"/>
</dbReference>
<dbReference type="RefSeq" id="WP_011184131.1">
    <property type="nucleotide sequence ID" value="NC_006086.1"/>
</dbReference>
<dbReference type="SMR" id="Q5XE18"/>
<dbReference type="KEGG" id="spa:M6_Spy0210"/>
<dbReference type="HOGENOM" id="CLU_022060_0_1_9"/>
<dbReference type="UniPathway" id="UPA00392"/>
<dbReference type="Proteomes" id="UP000001167">
    <property type="component" value="Chromosome"/>
</dbReference>
<dbReference type="GO" id="GO:0005829">
    <property type="term" value="C:cytosol"/>
    <property type="evidence" value="ECO:0007669"/>
    <property type="project" value="TreeGrafter"/>
</dbReference>
<dbReference type="GO" id="GO:0046872">
    <property type="term" value="F:metal ion binding"/>
    <property type="evidence" value="ECO:0007669"/>
    <property type="project" value="UniProtKB-KW"/>
</dbReference>
<dbReference type="GO" id="GO:0008479">
    <property type="term" value="F:tRNA-guanosine(34) queuine transglycosylase activity"/>
    <property type="evidence" value="ECO:0007669"/>
    <property type="project" value="UniProtKB-UniRule"/>
</dbReference>
<dbReference type="GO" id="GO:0008616">
    <property type="term" value="P:queuosine biosynthetic process"/>
    <property type="evidence" value="ECO:0007669"/>
    <property type="project" value="UniProtKB-UniRule"/>
</dbReference>
<dbReference type="GO" id="GO:0002099">
    <property type="term" value="P:tRNA wobble guanine modification"/>
    <property type="evidence" value="ECO:0007669"/>
    <property type="project" value="TreeGrafter"/>
</dbReference>
<dbReference type="GO" id="GO:0101030">
    <property type="term" value="P:tRNA-guanine transglycosylation"/>
    <property type="evidence" value="ECO:0007669"/>
    <property type="project" value="InterPro"/>
</dbReference>
<dbReference type="FunFam" id="3.20.20.105:FF:000001">
    <property type="entry name" value="Queuine tRNA-ribosyltransferase"/>
    <property type="match status" value="1"/>
</dbReference>
<dbReference type="Gene3D" id="3.20.20.105">
    <property type="entry name" value="Queuine tRNA-ribosyltransferase-like"/>
    <property type="match status" value="1"/>
</dbReference>
<dbReference type="HAMAP" id="MF_00168">
    <property type="entry name" value="Q_tRNA_Tgt"/>
    <property type="match status" value="1"/>
</dbReference>
<dbReference type="InterPro" id="IPR050076">
    <property type="entry name" value="ArchSynthase1/Queuine_TRR"/>
</dbReference>
<dbReference type="InterPro" id="IPR004803">
    <property type="entry name" value="TGT"/>
</dbReference>
<dbReference type="InterPro" id="IPR036511">
    <property type="entry name" value="TGT-like_sf"/>
</dbReference>
<dbReference type="InterPro" id="IPR002616">
    <property type="entry name" value="tRNA_ribo_trans-like"/>
</dbReference>
<dbReference type="NCBIfam" id="TIGR00430">
    <property type="entry name" value="Q_tRNA_tgt"/>
    <property type="match status" value="1"/>
</dbReference>
<dbReference type="NCBIfam" id="TIGR00449">
    <property type="entry name" value="tgt_general"/>
    <property type="match status" value="1"/>
</dbReference>
<dbReference type="PANTHER" id="PTHR46499">
    <property type="entry name" value="QUEUINE TRNA-RIBOSYLTRANSFERASE"/>
    <property type="match status" value="1"/>
</dbReference>
<dbReference type="PANTHER" id="PTHR46499:SF1">
    <property type="entry name" value="QUEUINE TRNA-RIBOSYLTRANSFERASE"/>
    <property type="match status" value="1"/>
</dbReference>
<dbReference type="Pfam" id="PF01702">
    <property type="entry name" value="TGT"/>
    <property type="match status" value="1"/>
</dbReference>
<dbReference type="SUPFAM" id="SSF51713">
    <property type="entry name" value="tRNA-guanine transglycosylase"/>
    <property type="match status" value="1"/>
</dbReference>